<evidence type="ECO:0000255" key="1">
    <source>
        <dbReference type="HAMAP-Rule" id="MF_01026"/>
    </source>
</evidence>
<name>LEUC_SHOC1</name>
<gene>
    <name evidence="1" type="primary">leuC</name>
    <name type="ordered locus">ABC2640</name>
</gene>
<comment type="function">
    <text evidence="1">Catalyzes the isomerization between 2-isopropylmalate and 3-isopropylmalate, via the formation of 2-isopropylmaleate.</text>
</comment>
<comment type="catalytic activity">
    <reaction evidence="1">
        <text>(2R,3S)-3-isopropylmalate = (2S)-2-isopropylmalate</text>
        <dbReference type="Rhea" id="RHEA:32287"/>
        <dbReference type="ChEBI" id="CHEBI:1178"/>
        <dbReference type="ChEBI" id="CHEBI:35121"/>
        <dbReference type="EC" id="4.2.1.33"/>
    </reaction>
</comment>
<comment type="cofactor">
    <cofactor evidence="1">
        <name>[4Fe-4S] cluster</name>
        <dbReference type="ChEBI" id="CHEBI:49883"/>
    </cofactor>
    <text evidence="1">Binds 1 [4Fe-4S] cluster per subunit.</text>
</comment>
<comment type="pathway">
    <text evidence="1">Amino-acid biosynthesis; L-leucine biosynthesis; L-leucine from 3-methyl-2-oxobutanoate: step 2/4.</text>
</comment>
<comment type="subunit">
    <text evidence="1">Heterodimer of LeuC and LeuD.</text>
</comment>
<comment type="similarity">
    <text evidence="1">Belongs to the aconitase/IPM isomerase family. LeuC type 1 subfamily.</text>
</comment>
<organism>
    <name type="scientific">Shouchella clausii (strain KSM-K16)</name>
    <name type="common">Alkalihalobacillus clausii</name>
    <dbReference type="NCBI Taxonomy" id="66692"/>
    <lineage>
        <taxon>Bacteria</taxon>
        <taxon>Bacillati</taxon>
        <taxon>Bacillota</taxon>
        <taxon>Bacilli</taxon>
        <taxon>Bacillales</taxon>
        <taxon>Bacillaceae</taxon>
        <taxon>Shouchella</taxon>
    </lineage>
</organism>
<proteinExistence type="inferred from homology"/>
<protein>
    <recommendedName>
        <fullName evidence="1">3-isopropylmalate dehydratase large subunit</fullName>
        <ecNumber evidence="1">4.2.1.33</ecNumber>
    </recommendedName>
    <alternativeName>
        <fullName evidence="1">Alpha-IPM isomerase</fullName>
        <shortName evidence="1">IPMI</shortName>
    </alternativeName>
    <alternativeName>
        <fullName evidence="1">Isopropylmalate isomerase</fullName>
    </alternativeName>
</protein>
<accession>Q5WEN5</accession>
<reference key="1">
    <citation type="submission" date="2003-10" db="EMBL/GenBank/DDBJ databases">
        <title>The complete genome sequence of the alkaliphilic Bacillus clausii KSM-K16.</title>
        <authorList>
            <person name="Takaki Y."/>
            <person name="Kageyama Y."/>
            <person name="Shimamura S."/>
            <person name="Suzuki H."/>
            <person name="Nishi S."/>
            <person name="Hatada Y."/>
            <person name="Kawai S."/>
            <person name="Ito S."/>
            <person name="Horikoshi K."/>
        </authorList>
    </citation>
    <scope>NUCLEOTIDE SEQUENCE [LARGE SCALE GENOMIC DNA]</scope>
    <source>
        <strain>KSM-K16</strain>
    </source>
</reference>
<dbReference type="EC" id="4.2.1.33" evidence="1"/>
<dbReference type="EMBL" id="AP006627">
    <property type="protein sequence ID" value="BAD65175.1"/>
    <property type="molecule type" value="Genomic_DNA"/>
</dbReference>
<dbReference type="RefSeq" id="WP_011247483.1">
    <property type="nucleotide sequence ID" value="NC_006582.1"/>
</dbReference>
<dbReference type="SMR" id="Q5WEN5"/>
<dbReference type="STRING" id="66692.ABC2640"/>
<dbReference type="KEGG" id="bcl:ABC2640"/>
<dbReference type="eggNOG" id="COG0065">
    <property type="taxonomic scope" value="Bacteria"/>
</dbReference>
<dbReference type="HOGENOM" id="CLU_006714_3_4_9"/>
<dbReference type="OrthoDB" id="9802769at2"/>
<dbReference type="UniPathway" id="UPA00048">
    <property type="reaction ID" value="UER00071"/>
</dbReference>
<dbReference type="Proteomes" id="UP000001168">
    <property type="component" value="Chromosome"/>
</dbReference>
<dbReference type="GO" id="GO:0003861">
    <property type="term" value="F:3-isopropylmalate dehydratase activity"/>
    <property type="evidence" value="ECO:0007669"/>
    <property type="project" value="UniProtKB-UniRule"/>
</dbReference>
<dbReference type="GO" id="GO:0051539">
    <property type="term" value="F:4 iron, 4 sulfur cluster binding"/>
    <property type="evidence" value="ECO:0007669"/>
    <property type="project" value="UniProtKB-KW"/>
</dbReference>
<dbReference type="GO" id="GO:0046872">
    <property type="term" value="F:metal ion binding"/>
    <property type="evidence" value="ECO:0007669"/>
    <property type="project" value="UniProtKB-KW"/>
</dbReference>
<dbReference type="GO" id="GO:0009098">
    <property type="term" value="P:L-leucine biosynthetic process"/>
    <property type="evidence" value="ECO:0007669"/>
    <property type="project" value="UniProtKB-UniRule"/>
</dbReference>
<dbReference type="CDD" id="cd01583">
    <property type="entry name" value="IPMI"/>
    <property type="match status" value="1"/>
</dbReference>
<dbReference type="FunFam" id="3.30.499.10:FF:000007">
    <property type="entry name" value="3-isopropylmalate dehydratase large subunit"/>
    <property type="match status" value="1"/>
</dbReference>
<dbReference type="Gene3D" id="3.30.499.10">
    <property type="entry name" value="Aconitase, domain 3"/>
    <property type="match status" value="2"/>
</dbReference>
<dbReference type="HAMAP" id="MF_01026">
    <property type="entry name" value="LeuC_type1"/>
    <property type="match status" value="1"/>
</dbReference>
<dbReference type="InterPro" id="IPR004430">
    <property type="entry name" value="3-IsopropMal_deHydase_lsu"/>
</dbReference>
<dbReference type="InterPro" id="IPR015931">
    <property type="entry name" value="Acnase/IPM_dHydase_lsu_aba_1/3"/>
</dbReference>
<dbReference type="InterPro" id="IPR001030">
    <property type="entry name" value="Acoase/IPM_deHydtase_lsu_aba"/>
</dbReference>
<dbReference type="InterPro" id="IPR018136">
    <property type="entry name" value="Aconitase_4Fe-4S_BS"/>
</dbReference>
<dbReference type="InterPro" id="IPR036008">
    <property type="entry name" value="Aconitase_4Fe-4S_dom"/>
</dbReference>
<dbReference type="InterPro" id="IPR050067">
    <property type="entry name" value="IPM_dehydratase_rel_enz"/>
</dbReference>
<dbReference type="InterPro" id="IPR033941">
    <property type="entry name" value="IPMI_cat"/>
</dbReference>
<dbReference type="NCBIfam" id="TIGR00170">
    <property type="entry name" value="leuC"/>
    <property type="match status" value="1"/>
</dbReference>
<dbReference type="NCBIfam" id="NF004016">
    <property type="entry name" value="PRK05478.1"/>
    <property type="match status" value="1"/>
</dbReference>
<dbReference type="NCBIfam" id="NF009116">
    <property type="entry name" value="PRK12466.1"/>
    <property type="match status" value="1"/>
</dbReference>
<dbReference type="PANTHER" id="PTHR43822:SF9">
    <property type="entry name" value="3-ISOPROPYLMALATE DEHYDRATASE"/>
    <property type="match status" value="1"/>
</dbReference>
<dbReference type="PANTHER" id="PTHR43822">
    <property type="entry name" value="HOMOACONITASE, MITOCHONDRIAL-RELATED"/>
    <property type="match status" value="1"/>
</dbReference>
<dbReference type="Pfam" id="PF00330">
    <property type="entry name" value="Aconitase"/>
    <property type="match status" value="1"/>
</dbReference>
<dbReference type="PRINTS" id="PR00415">
    <property type="entry name" value="ACONITASE"/>
</dbReference>
<dbReference type="SUPFAM" id="SSF53732">
    <property type="entry name" value="Aconitase iron-sulfur domain"/>
    <property type="match status" value="1"/>
</dbReference>
<dbReference type="PROSITE" id="PS00450">
    <property type="entry name" value="ACONITASE_1"/>
    <property type="match status" value="1"/>
</dbReference>
<keyword id="KW-0004">4Fe-4S</keyword>
<keyword id="KW-0028">Amino-acid biosynthesis</keyword>
<keyword id="KW-0100">Branched-chain amino acid biosynthesis</keyword>
<keyword id="KW-0408">Iron</keyword>
<keyword id="KW-0411">Iron-sulfur</keyword>
<keyword id="KW-0432">Leucine biosynthesis</keyword>
<keyword id="KW-0456">Lyase</keyword>
<keyword id="KW-0479">Metal-binding</keyword>
<keyword id="KW-1185">Reference proteome</keyword>
<feature type="chain" id="PRO_0000076697" description="3-isopropylmalate dehydratase large subunit">
    <location>
        <begin position="1"/>
        <end position="470"/>
    </location>
</feature>
<feature type="binding site" evidence="1">
    <location>
        <position position="346"/>
    </location>
    <ligand>
        <name>[4Fe-4S] cluster</name>
        <dbReference type="ChEBI" id="CHEBI:49883"/>
    </ligand>
</feature>
<feature type="binding site" evidence="1">
    <location>
        <position position="406"/>
    </location>
    <ligand>
        <name>[4Fe-4S] cluster</name>
        <dbReference type="ChEBI" id="CHEBI:49883"/>
    </ligand>
</feature>
<feature type="binding site" evidence="1">
    <location>
        <position position="409"/>
    </location>
    <ligand>
        <name>[4Fe-4S] cluster</name>
        <dbReference type="ChEBI" id="CHEBI:49883"/>
    </ligand>
</feature>
<sequence length="470" mass="50857">MAKTIIEKIWESHTVVDESGKPNLLYVDLHMVHEVTSPQAFEGLRLAGRTVRRPDKTFATMDHNVPTVNRYDIRDQIARTQMETLAANCKQFGIEMVDLDHPENGIVHVIGPELGLTQPGHVIVCGDSHTSTHGAFGAIAFGIGTSEVEHVLATQTIWQSKPKTLEVHISGRLNEGISAKDVILAIIAKFGVDIGTGSIIEFTGEAIRGMTMEERMTICNMSIEAGAKAGLISPDQVTFDYLQGRANVPKGEAYDEIVEKWAQLATDPGATYDRSVTIDAAEIEPMVTWGTNPGQGAGISKAVPRLDDAKSEVERRAISQALDYMDIKPGTPLSEIEIQHVFIGSCTNSRLSDLRAAAAVINGRKVAPGVRALIVPGSQRVKKRAEEEGLDQVFKEAGFEWRDSGCSMCLSMNPDVVPEGERCASTSNRNFEGRQGKGARTHLVSPAMAAAAAIAGRFVDVRKMVKAGEC</sequence>